<gene>
    <name type="ORF">IIV6-141R</name>
</gene>
<comment type="subcellular location">
    <subcellularLocation>
        <location evidence="3">Membrane</location>
        <topology evidence="3">Single-pass membrane protein</topology>
    </subcellularLocation>
</comment>
<dbReference type="EMBL" id="AF303741">
    <property type="protein sequence ID" value="AAB94458.1"/>
    <property type="molecule type" value="Genomic_DNA"/>
</dbReference>
<dbReference type="PIR" id="T03084">
    <property type="entry name" value="T03084"/>
</dbReference>
<dbReference type="RefSeq" id="NP_149604.1">
    <property type="nucleotide sequence ID" value="NC_003038.1"/>
</dbReference>
<dbReference type="SMR" id="O55747"/>
<dbReference type="KEGG" id="vg:1733407"/>
<dbReference type="Proteomes" id="UP000001359">
    <property type="component" value="Genome"/>
</dbReference>
<dbReference type="GO" id="GO:0016020">
    <property type="term" value="C:membrane"/>
    <property type="evidence" value="ECO:0007669"/>
    <property type="project" value="UniProtKB-SubCell"/>
</dbReference>
<feature type="chain" id="PRO_0000378010" description="Uncharacterized protein 141R">
    <location>
        <begin position="1"/>
        <end position="84"/>
    </location>
</feature>
<feature type="transmembrane region" description="Helical" evidence="1">
    <location>
        <begin position="49"/>
        <end position="69"/>
    </location>
</feature>
<feature type="region of interest" description="Disordered" evidence="2">
    <location>
        <begin position="1"/>
        <end position="21"/>
    </location>
</feature>
<protein>
    <recommendedName>
        <fullName>Uncharacterized protein 141R</fullName>
    </recommendedName>
</protein>
<proteinExistence type="predicted"/>
<evidence type="ECO:0000255" key="1"/>
<evidence type="ECO:0000256" key="2">
    <source>
        <dbReference type="SAM" id="MobiDB-lite"/>
    </source>
</evidence>
<evidence type="ECO:0000305" key="3"/>
<organism>
    <name type="scientific">Invertebrate iridescent virus 6</name>
    <name type="common">IIV-6</name>
    <name type="synonym">Chilo iridescent virus</name>
    <dbReference type="NCBI Taxonomy" id="176652"/>
    <lineage>
        <taxon>Viruses</taxon>
        <taxon>Varidnaviria</taxon>
        <taxon>Bamfordvirae</taxon>
        <taxon>Nucleocytoviricota</taxon>
        <taxon>Megaviricetes</taxon>
        <taxon>Pimascovirales</taxon>
        <taxon>Iridoviridae</taxon>
        <taxon>Betairidovirinae</taxon>
        <taxon>Iridovirus</taxon>
    </lineage>
</organism>
<keyword id="KW-0472">Membrane</keyword>
<keyword id="KW-1185">Reference proteome</keyword>
<keyword id="KW-0812">Transmembrane</keyword>
<keyword id="KW-1133">Transmembrane helix</keyword>
<organismHost>
    <name type="scientific">Acheta domesticus</name>
    <name type="common">House cricket</name>
    <dbReference type="NCBI Taxonomy" id="6997"/>
</organismHost>
<organismHost>
    <name type="scientific">Chilo suppressalis</name>
    <name type="common">Asiatic rice borer moth</name>
    <dbReference type="NCBI Taxonomy" id="168631"/>
</organismHost>
<organismHost>
    <name type="scientific">Gryllus bimaculatus</name>
    <name type="common">Two-spotted cricket</name>
    <dbReference type="NCBI Taxonomy" id="6999"/>
</organismHost>
<organismHost>
    <name type="scientific">Gryllus campestris</name>
    <dbReference type="NCBI Taxonomy" id="58607"/>
</organismHost>
<organismHost>
    <name type="scientific">Spodoptera frugiperda</name>
    <name type="common">Fall armyworm</name>
    <dbReference type="NCBI Taxonomy" id="7108"/>
</organismHost>
<name>141R_IIV6</name>
<sequence>MYYRRQGEPQEMYGNGNNSVSSSAVNTYQPYYKEDFNILDPALSDSQRYIIYAIVAAILLLLFWLLYKKYGHKIGRKGSVSMFY</sequence>
<reference key="1">
    <citation type="journal article" date="2001" name="Virology">
        <title>Analysis of the first complete DNA sequence of an invertebrate iridovirus: coding strategy of the genome of Chilo iridescent virus.</title>
        <authorList>
            <person name="Jakob N.J."/>
            <person name="Mueller K."/>
            <person name="Bahr U."/>
            <person name="Darai G."/>
        </authorList>
    </citation>
    <scope>NUCLEOTIDE SEQUENCE [LARGE SCALE GENOMIC DNA]</scope>
</reference>
<reference key="2">
    <citation type="journal article" date="2007" name="Virol. J.">
        <title>Comparative genomic analysis of the family Iridoviridae: re-annotating and defining the core set of iridovirus genes.</title>
        <authorList>
            <person name="Eaton H.E."/>
            <person name="Metcalf J."/>
            <person name="Penny E."/>
            <person name="Tcherepanov V."/>
            <person name="Upton C."/>
            <person name="Brunetti C.R."/>
        </authorList>
    </citation>
    <scope>GENOME REANNOTATION</scope>
</reference>
<accession>O55747</accession>